<keyword id="KW-0963">Cytoplasm</keyword>
<keyword id="KW-0275">Fatty acid biosynthesis</keyword>
<keyword id="KW-0276">Fatty acid metabolism</keyword>
<keyword id="KW-0444">Lipid biosynthesis</keyword>
<keyword id="KW-0443">Lipid metabolism</keyword>
<keyword id="KW-0596">Phosphopantetheine</keyword>
<keyword id="KW-0597">Phosphoprotein</keyword>
<keyword id="KW-1185">Reference proteome</keyword>
<comment type="function">
    <text evidence="1">Carrier of the growing fatty acid chain in fatty acid biosynthesis.</text>
</comment>
<comment type="pathway">
    <text evidence="1">Lipid metabolism; fatty acid biosynthesis.</text>
</comment>
<comment type="subcellular location">
    <subcellularLocation>
        <location evidence="1">Cytoplasm</location>
    </subcellularLocation>
</comment>
<comment type="PTM">
    <text evidence="1">4'-phosphopantetheine is transferred from CoA to a specific serine of apo-ACP by AcpS. This modification is essential for activity because fatty acids are bound in thioester linkage to the sulfhydryl of the prosthetic group.</text>
</comment>
<comment type="similarity">
    <text evidence="1">Belongs to the acyl carrier protein (ACP) family.</text>
</comment>
<name>ACP_BEUC1</name>
<proteinExistence type="inferred from homology"/>
<evidence type="ECO:0000255" key="1">
    <source>
        <dbReference type="HAMAP-Rule" id="MF_01217"/>
    </source>
</evidence>
<evidence type="ECO:0000255" key="2">
    <source>
        <dbReference type="PROSITE-ProRule" id="PRU00258"/>
    </source>
</evidence>
<feature type="chain" id="PRO_1000213902" description="Acyl carrier protein">
    <location>
        <begin position="1"/>
        <end position="82"/>
    </location>
</feature>
<feature type="domain" description="Carrier" evidence="2">
    <location>
        <begin position="3"/>
        <end position="81"/>
    </location>
</feature>
<feature type="modified residue" description="O-(pantetheine 4'-phosphoryl)serine" evidence="2">
    <location>
        <position position="41"/>
    </location>
</feature>
<gene>
    <name evidence="1" type="primary">acpP</name>
    <name type="ordered locus">Bcav_1805</name>
</gene>
<reference key="1">
    <citation type="journal article" date="2009" name="Stand. Genomic Sci.">
        <title>Complete genome sequence of Beutenbergia cavernae type strain (HKI 0122).</title>
        <authorList>
            <person name="Land M."/>
            <person name="Pukall R."/>
            <person name="Abt B."/>
            <person name="Goker M."/>
            <person name="Rohde M."/>
            <person name="Glavina Del Rio T."/>
            <person name="Tice H."/>
            <person name="Copeland A."/>
            <person name="Cheng J.F."/>
            <person name="Lucas S."/>
            <person name="Chen F."/>
            <person name="Nolan M."/>
            <person name="Bruce D."/>
            <person name="Goodwin L."/>
            <person name="Pitluck S."/>
            <person name="Ivanova N."/>
            <person name="Mavromatis K."/>
            <person name="Ovchinnikova G."/>
            <person name="Pati A."/>
            <person name="Chen A."/>
            <person name="Palaniappan K."/>
            <person name="Hauser L."/>
            <person name="Chang Y.J."/>
            <person name="Jefferies C.C."/>
            <person name="Saunders E."/>
            <person name="Brettin T."/>
            <person name="Detter J.C."/>
            <person name="Han C."/>
            <person name="Chain P."/>
            <person name="Bristow J."/>
            <person name="Eisen J.A."/>
            <person name="Markowitz V."/>
            <person name="Hugenholtz P."/>
            <person name="Kyrpides N.C."/>
            <person name="Klenk H.P."/>
            <person name="Lapidus A."/>
        </authorList>
    </citation>
    <scope>NUCLEOTIDE SEQUENCE [LARGE SCALE GENOMIC DNA]</scope>
    <source>
        <strain>ATCC BAA-8 / DSM 12333 / CCUG 43141 / JCM 11478 / NBRC 16432 / NCIMB 13614 / HKI 0122</strain>
    </source>
</reference>
<organism>
    <name type="scientific">Beutenbergia cavernae (strain ATCC BAA-8 / DSM 12333 / CCUG 43141 / JCM 11478 / NBRC 16432 / NCIMB 13614 / HKI 0122)</name>
    <dbReference type="NCBI Taxonomy" id="471853"/>
    <lineage>
        <taxon>Bacteria</taxon>
        <taxon>Bacillati</taxon>
        <taxon>Actinomycetota</taxon>
        <taxon>Actinomycetes</taxon>
        <taxon>Micrococcales</taxon>
        <taxon>Beutenbergiaceae</taxon>
        <taxon>Beutenbergia</taxon>
    </lineage>
</organism>
<accession>C5C4T3</accession>
<dbReference type="EMBL" id="CP001618">
    <property type="protein sequence ID" value="ACQ80061.1"/>
    <property type="molecule type" value="Genomic_DNA"/>
</dbReference>
<dbReference type="RefSeq" id="WP_015882301.1">
    <property type="nucleotide sequence ID" value="NC_012669.1"/>
</dbReference>
<dbReference type="SMR" id="C5C4T3"/>
<dbReference type="STRING" id="471853.Bcav_1805"/>
<dbReference type="KEGG" id="bcv:Bcav_1805"/>
<dbReference type="eggNOG" id="COG0236">
    <property type="taxonomic scope" value="Bacteria"/>
</dbReference>
<dbReference type="HOGENOM" id="CLU_108696_5_6_11"/>
<dbReference type="OrthoDB" id="9804551at2"/>
<dbReference type="UniPathway" id="UPA00094"/>
<dbReference type="Proteomes" id="UP000007962">
    <property type="component" value="Chromosome"/>
</dbReference>
<dbReference type="GO" id="GO:0005829">
    <property type="term" value="C:cytosol"/>
    <property type="evidence" value="ECO:0007669"/>
    <property type="project" value="TreeGrafter"/>
</dbReference>
<dbReference type="GO" id="GO:0016020">
    <property type="term" value="C:membrane"/>
    <property type="evidence" value="ECO:0007669"/>
    <property type="project" value="GOC"/>
</dbReference>
<dbReference type="GO" id="GO:0000035">
    <property type="term" value="F:acyl binding"/>
    <property type="evidence" value="ECO:0007669"/>
    <property type="project" value="TreeGrafter"/>
</dbReference>
<dbReference type="GO" id="GO:0000036">
    <property type="term" value="F:acyl carrier activity"/>
    <property type="evidence" value="ECO:0007669"/>
    <property type="project" value="UniProtKB-UniRule"/>
</dbReference>
<dbReference type="GO" id="GO:0009245">
    <property type="term" value="P:lipid A biosynthetic process"/>
    <property type="evidence" value="ECO:0007669"/>
    <property type="project" value="TreeGrafter"/>
</dbReference>
<dbReference type="Gene3D" id="1.10.1200.10">
    <property type="entry name" value="ACP-like"/>
    <property type="match status" value="1"/>
</dbReference>
<dbReference type="HAMAP" id="MF_01217">
    <property type="entry name" value="Acyl_carrier"/>
    <property type="match status" value="1"/>
</dbReference>
<dbReference type="InterPro" id="IPR003231">
    <property type="entry name" value="ACP"/>
</dbReference>
<dbReference type="InterPro" id="IPR036736">
    <property type="entry name" value="ACP-like_sf"/>
</dbReference>
<dbReference type="InterPro" id="IPR009081">
    <property type="entry name" value="PP-bd_ACP"/>
</dbReference>
<dbReference type="NCBIfam" id="NF002147">
    <property type="entry name" value="PRK00982.1-1"/>
    <property type="match status" value="1"/>
</dbReference>
<dbReference type="NCBIfam" id="NF002150">
    <property type="entry name" value="PRK00982.1-4"/>
    <property type="match status" value="1"/>
</dbReference>
<dbReference type="PANTHER" id="PTHR20863">
    <property type="entry name" value="ACYL CARRIER PROTEIN"/>
    <property type="match status" value="1"/>
</dbReference>
<dbReference type="PANTHER" id="PTHR20863:SF76">
    <property type="entry name" value="CARRIER DOMAIN-CONTAINING PROTEIN"/>
    <property type="match status" value="1"/>
</dbReference>
<dbReference type="Pfam" id="PF00550">
    <property type="entry name" value="PP-binding"/>
    <property type="match status" value="1"/>
</dbReference>
<dbReference type="SUPFAM" id="SSF47336">
    <property type="entry name" value="ACP-like"/>
    <property type="match status" value="1"/>
</dbReference>
<dbReference type="PROSITE" id="PS50075">
    <property type="entry name" value="CARRIER"/>
    <property type="match status" value="1"/>
</dbReference>
<sequence>MASSEQEILAGLAEIVNEETGLPTDSVQLDKSFTDDLDIDSLSMMTIVTQAEDKFSVTIPDDEVKNLVTVGDAVTYIAGAQA</sequence>
<protein>
    <recommendedName>
        <fullName evidence="1">Acyl carrier protein</fullName>
        <shortName evidence="1">ACP</shortName>
    </recommendedName>
</protein>